<protein>
    <recommendedName>
        <fullName evidence="1">Chaperone protein HtpG</fullName>
    </recommendedName>
    <alternativeName>
        <fullName evidence="1">Heat shock protein HtpG</fullName>
    </alternativeName>
    <alternativeName>
        <fullName evidence="1">High temperature protein G</fullName>
    </alternativeName>
</protein>
<name>HTPG_ACIF2</name>
<comment type="function">
    <text evidence="1">Molecular chaperone. Has ATPase activity.</text>
</comment>
<comment type="subunit">
    <text evidence="1">Homodimer.</text>
</comment>
<comment type="subcellular location">
    <subcellularLocation>
        <location evidence="1">Cytoplasm</location>
    </subcellularLocation>
</comment>
<comment type="similarity">
    <text evidence="1">Belongs to the heat shock protein 90 family.</text>
</comment>
<gene>
    <name evidence="1" type="primary">htpG</name>
    <name type="ordered locus">AFE_3158</name>
</gene>
<accession>B7JAR2</accession>
<feature type="chain" id="PRO_1000127021" description="Chaperone protein HtpG">
    <location>
        <begin position="1"/>
        <end position="629"/>
    </location>
</feature>
<feature type="region of interest" description="A; substrate-binding" evidence="1">
    <location>
        <begin position="1"/>
        <end position="337"/>
    </location>
</feature>
<feature type="region of interest" description="B" evidence="1">
    <location>
        <begin position="338"/>
        <end position="554"/>
    </location>
</feature>
<feature type="region of interest" description="C" evidence="1">
    <location>
        <begin position="555"/>
        <end position="629"/>
    </location>
</feature>
<evidence type="ECO:0000255" key="1">
    <source>
        <dbReference type="HAMAP-Rule" id="MF_00505"/>
    </source>
</evidence>
<organism>
    <name type="scientific">Acidithiobacillus ferrooxidans (strain ATCC 23270 / DSM 14882 / CIP 104768 / NCIMB 8455)</name>
    <name type="common">Ferrobacillus ferrooxidans (strain ATCC 23270)</name>
    <dbReference type="NCBI Taxonomy" id="243159"/>
    <lineage>
        <taxon>Bacteria</taxon>
        <taxon>Pseudomonadati</taxon>
        <taxon>Pseudomonadota</taxon>
        <taxon>Acidithiobacillia</taxon>
        <taxon>Acidithiobacillales</taxon>
        <taxon>Acidithiobacillaceae</taxon>
        <taxon>Acidithiobacillus</taxon>
    </lineage>
</organism>
<sequence>MAASKETMQFQTEINQLLQLMIHSLYSNKEIFLRELISNASDACDKLRFEALADPALLTGDSELKVEVDFDPEAGTITVRDNGIGMNRDEVIANIGTIAKSGTREFFERLSGDQTKDAKLIGQFGVGFYSAFIVADRVSLNTRRAGMEAEHGVRWESDGTGTYTLETLDLPARGTEIVLHLREEERQDLLSAWRLRSIINKYSDHIPLSIRMRKIGEGGKPGDEWETVNKASALWQRSKSEISDDEYKEFYRYVSHDYGDPLTWSHNHVEGRLEYTSLLFIPAKAPFDLWDHNHPHGIKLYVQRVFIMDDAEQLLPRYLRFVRGVIDSSDLPLNVSREILQGNRVIDQMRSGSVKRILGLLEEMAEKEPEKYQTFWNEFGRVLKEGPGEDYSNREQIARLLRFASTHTDTDTQNVSLADYLARMAEGQDKIYYITADSFLAAKNSPQLELLRKKGIEVLLLSDRVDEWLTSHLPEFEGKALTSVAKGALDLGAIETEEERKSQEETEKDAEGLVERIKNALGERVETVRVSHRLTSSPACIVLGERDMALYMQQLLKQAGHEISSTKPVLEINPTHPMLARIEGEKDDTRFAEWSALLLDQAILAEGGQLEDPAGFVARINQLMLALAG</sequence>
<proteinExistence type="inferred from homology"/>
<dbReference type="EMBL" id="CP001219">
    <property type="protein sequence ID" value="ACK80199.1"/>
    <property type="molecule type" value="Genomic_DNA"/>
</dbReference>
<dbReference type="RefSeq" id="WP_012537630.1">
    <property type="nucleotide sequence ID" value="NC_011761.1"/>
</dbReference>
<dbReference type="SMR" id="B7JAR2"/>
<dbReference type="STRING" id="243159.AFE_3158"/>
<dbReference type="PaxDb" id="243159-AFE_3158"/>
<dbReference type="GeneID" id="65282145"/>
<dbReference type="KEGG" id="afr:AFE_3158"/>
<dbReference type="eggNOG" id="COG0326">
    <property type="taxonomic scope" value="Bacteria"/>
</dbReference>
<dbReference type="HOGENOM" id="CLU_006684_3_0_6"/>
<dbReference type="Proteomes" id="UP000001362">
    <property type="component" value="Chromosome"/>
</dbReference>
<dbReference type="GO" id="GO:0005737">
    <property type="term" value="C:cytoplasm"/>
    <property type="evidence" value="ECO:0007669"/>
    <property type="project" value="UniProtKB-SubCell"/>
</dbReference>
<dbReference type="GO" id="GO:0005524">
    <property type="term" value="F:ATP binding"/>
    <property type="evidence" value="ECO:0007669"/>
    <property type="project" value="UniProtKB-UniRule"/>
</dbReference>
<dbReference type="GO" id="GO:0016887">
    <property type="term" value="F:ATP hydrolysis activity"/>
    <property type="evidence" value="ECO:0007669"/>
    <property type="project" value="InterPro"/>
</dbReference>
<dbReference type="GO" id="GO:0140662">
    <property type="term" value="F:ATP-dependent protein folding chaperone"/>
    <property type="evidence" value="ECO:0007669"/>
    <property type="project" value="InterPro"/>
</dbReference>
<dbReference type="GO" id="GO:0051082">
    <property type="term" value="F:unfolded protein binding"/>
    <property type="evidence" value="ECO:0007669"/>
    <property type="project" value="UniProtKB-UniRule"/>
</dbReference>
<dbReference type="CDD" id="cd16927">
    <property type="entry name" value="HATPase_Hsp90-like"/>
    <property type="match status" value="1"/>
</dbReference>
<dbReference type="FunFam" id="3.30.230.80:FF:000002">
    <property type="entry name" value="Molecular chaperone HtpG"/>
    <property type="match status" value="1"/>
</dbReference>
<dbReference type="FunFam" id="3.30.565.10:FF:000009">
    <property type="entry name" value="Molecular chaperone HtpG"/>
    <property type="match status" value="1"/>
</dbReference>
<dbReference type="Gene3D" id="3.30.230.80">
    <property type="match status" value="1"/>
</dbReference>
<dbReference type="Gene3D" id="3.40.50.11260">
    <property type="match status" value="1"/>
</dbReference>
<dbReference type="Gene3D" id="1.20.120.790">
    <property type="entry name" value="Heat shock protein 90, C-terminal domain"/>
    <property type="match status" value="1"/>
</dbReference>
<dbReference type="Gene3D" id="3.30.565.10">
    <property type="entry name" value="Histidine kinase-like ATPase, C-terminal domain"/>
    <property type="match status" value="1"/>
</dbReference>
<dbReference type="HAMAP" id="MF_00505">
    <property type="entry name" value="HSP90"/>
    <property type="match status" value="1"/>
</dbReference>
<dbReference type="InterPro" id="IPR036890">
    <property type="entry name" value="HATPase_C_sf"/>
</dbReference>
<dbReference type="InterPro" id="IPR019805">
    <property type="entry name" value="Heat_shock_protein_90_CS"/>
</dbReference>
<dbReference type="InterPro" id="IPR037196">
    <property type="entry name" value="HSP90_C"/>
</dbReference>
<dbReference type="InterPro" id="IPR001404">
    <property type="entry name" value="Hsp90_fam"/>
</dbReference>
<dbReference type="InterPro" id="IPR020575">
    <property type="entry name" value="Hsp90_N"/>
</dbReference>
<dbReference type="InterPro" id="IPR020568">
    <property type="entry name" value="Ribosomal_Su5_D2-typ_SF"/>
</dbReference>
<dbReference type="NCBIfam" id="NF003555">
    <property type="entry name" value="PRK05218.1"/>
    <property type="match status" value="1"/>
</dbReference>
<dbReference type="PANTHER" id="PTHR11528">
    <property type="entry name" value="HEAT SHOCK PROTEIN 90 FAMILY MEMBER"/>
    <property type="match status" value="1"/>
</dbReference>
<dbReference type="Pfam" id="PF13589">
    <property type="entry name" value="HATPase_c_3"/>
    <property type="match status" value="1"/>
</dbReference>
<dbReference type="Pfam" id="PF00183">
    <property type="entry name" value="HSP90"/>
    <property type="match status" value="1"/>
</dbReference>
<dbReference type="PIRSF" id="PIRSF002583">
    <property type="entry name" value="Hsp90"/>
    <property type="match status" value="1"/>
</dbReference>
<dbReference type="PRINTS" id="PR00775">
    <property type="entry name" value="HEATSHOCK90"/>
</dbReference>
<dbReference type="SMART" id="SM00387">
    <property type="entry name" value="HATPase_c"/>
    <property type="match status" value="1"/>
</dbReference>
<dbReference type="SUPFAM" id="SSF55874">
    <property type="entry name" value="ATPase domain of HSP90 chaperone/DNA topoisomerase II/histidine kinase"/>
    <property type="match status" value="1"/>
</dbReference>
<dbReference type="SUPFAM" id="SSF110942">
    <property type="entry name" value="HSP90 C-terminal domain"/>
    <property type="match status" value="1"/>
</dbReference>
<dbReference type="SUPFAM" id="SSF54211">
    <property type="entry name" value="Ribosomal protein S5 domain 2-like"/>
    <property type="match status" value="1"/>
</dbReference>
<dbReference type="PROSITE" id="PS00298">
    <property type="entry name" value="HSP90"/>
    <property type="match status" value="1"/>
</dbReference>
<reference key="1">
    <citation type="journal article" date="2008" name="BMC Genomics">
        <title>Acidithiobacillus ferrooxidans metabolism: from genome sequence to industrial applications.</title>
        <authorList>
            <person name="Valdes J."/>
            <person name="Pedroso I."/>
            <person name="Quatrini R."/>
            <person name="Dodson R.J."/>
            <person name="Tettelin H."/>
            <person name="Blake R. II"/>
            <person name="Eisen J.A."/>
            <person name="Holmes D.S."/>
        </authorList>
    </citation>
    <scope>NUCLEOTIDE SEQUENCE [LARGE SCALE GENOMIC DNA]</scope>
    <source>
        <strain>ATCC 23270 / DSM 14882 / CIP 104768 / NCIMB 8455</strain>
    </source>
</reference>
<keyword id="KW-0067">ATP-binding</keyword>
<keyword id="KW-0143">Chaperone</keyword>
<keyword id="KW-0963">Cytoplasm</keyword>
<keyword id="KW-0547">Nucleotide-binding</keyword>
<keyword id="KW-1185">Reference proteome</keyword>
<keyword id="KW-0346">Stress response</keyword>